<protein>
    <recommendedName>
        <fullName evidence="1">Indole-3-glycerol phosphate synthase</fullName>
        <shortName evidence="1">IGPS</shortName>
        <ecNumber evidence="1">4.1.1.48</ecNumber>
    </recommendedName>
</protein>
<evidence type="ECO:0000255" key="1">
    <source>
        <dbReference type="HAMAP-Rule" id="MF_00134"/>
    </source>
</evidence>
<gene>
    <name evidence="1" type="primary">trpC</name>
    <name type="ordered locus">Teth514_1866</name>
</gene>
<keyword id="KW-0028">Amino-acid biosynthesis</keyword>
<keyword id="KW-0057">Aromatic amino acid biosynthesis</keyword>
<keyword id="KW-0210">Decarboxylase</keyword>
<keyword id="KW-0456">Lyase</keyword>
<keyword id="KW-0822">Tryptophan biosynthesis</keyword>
<dbReference type="EC" id="4.1.1.48" evidence="1"/>
<dbReference type="EMBL" id="CP000923">
    <property type="protein sequence ID" value="ABY93146.1"/>
    <property type="molecule type" value="Genomic_DNA"/>
</dbReference>
<dbReference type="RefSeq" id="WP_009052485.1">
    <property type="nucleotide sequence ID" value="NC_010320.1"/>
</dbReference>
<dbReference type="SMR" id="B0K2U1"/>
<dbReference type="KEGG" id="tex:Teth514_1866"/>
<dbReference type="HOGENOM" id="CLU_034247_2_0_9"/>
<dbReference type="UniPathway" id="UPA00035">
    <property type="reaction ID" value="UER00043"/>
</dbReference>
<dbReference type="Proteomes" id="UP000002155">
    <property type="component" value="Chromosome"/>
</dbReference>
<dbReference type="GO" id="GO:0004425">
    <property type="term" value="F:indole-3-glycerol-phosphate synthase activity"/>
    <property type="evidence" value="ECO:0007669"/>
    <property type="project" value="UniProtKB-UniRule"/>
</dbReference>
<dbReference type="GO" id="GO:0004640">
    <property type="term" value="F:phosphoribosylanthranilate isomerase activity"/>
    <property type="evidence" value="ECO:0007669"/>
    <property type="project" value="TreeGrafter"/>
</dbReference>
<dbReference type="GO" id="GO:0000162">
    <property type="term" value="P:L-tryptophan biosynthetic process"/>
    <property type="evidence" value="ECO:0007669"/>
    <property type="project" value="UniProtKB-UniRule"/>
</dbReference>
<dbReference type="CDD" id="cd00331">
    <property type="entry name" value="IGPS"/>
    <property type="match status" value="1"/>
</dbReference>
<dbReference type="FunFam" id="3.20.20.70:FF:000024">
    <property type="entry name" value="Indole-3-glycerol phosphate synthase"/>
    <property type="match status" value="1"/>
</dbReference>
<dbReference type="Gene3D" id="3.20.20.70">
    <property type="entry name" value="Aldolase class I"/>
    <property type="match status" value="1"/>
</dbReference>
<dbReference type="HAMAP" id="MF_00134_B">
    <property type="entry name" value="IGPS_B"/>
    <property type="match status" value="1"/>
</dbReference>
<dbReference type="InterPro" id="IPR013785">
    <property type="entry name" value="Aldolase_TIM"/>
</dbReference>
<dbReference type="InterPro" id="IPR045186">
    <property type="entry name" value="Indole-3-glycerol_P_synth"/>
</dbReference>
<dbReference type="InterPro" id="IPR013798">
    <property type="entry name" value="Indole-3-glycerol_P_synth_dom"/>
</dbReference>
<dbReference type="InterPro" id="IPR001468">
    <property type="entry name" value="Indole-3-GlycerolPSynthase_CS"/>
</dbReference>
<dbReference type="InterPro" id="IPR011060">
    <property type="entry name" value="RibuloseP-bd_barrel"/>
</dbReference>
<dbReference type="NCBIfam" id="NF001377">
    <property type="entry name" value="PRK00278.2-4"/>
    <property type="match status" value="1"/>
</dbReference>
<dbReference type="PANTHER" id="PTHR22854:SF2">
    <property type="entry name" value="INDOLE-3-GLYCEROL-PHOSPHATE SYNTHASE"/>
    <property type="match status" value="1"/>
</dbReference>
<dbReference type="PANTHER" id="PTHR22854">
    <property type="entry name" value="TRYPTOPHAN BIOSYNTHESIS PROTEIN"/>
    <property type="match status" value="1"/>
</dbReference>
<dbReference type="Pfam" id="PF00218">
    <property type="entry name" value="IGPS"/>
    <property type="match status" value="1"/>
</dbReference>
<dbReference type="SUPFAM" id="SSF51366">
    <property type="entry name" value="Ribulose-phoshate binding barrel"/>
    <property type="match status" value="1"/>
</dbReference>
<dbReference type="PROSITE" id="PS00614">
    <property type="entry name" value="IGPS"/>
    <property type="match status" value="1"/>
</dbReference>
<feature type="chain" id="PRO_1000095905" description="Indole-3-glycerol phosphate synthase">
    <location>
        <begin position="1"/>
        <end position="260"/>
    </location>
</feature>
<accession>B0K2U1</accession>
<proteinExistence type="inferred from homology"/>
<sequence length="260" mass="29210">MVLDEIVRHKKKEVEEKKRIKPVEELINEIKGGYSGNFKKVLQKEGISIIGEIKQASPSKGIIKEDFDSVKIAKVYEKVDVDAISVLTEKEFFKGDDNYIREVKKVSSKPILRKDFIVDEYQIYESKILGADAVLLIVSVLGDKLRDFYNLSKSVGLDVLVEIHDRQQLEIALEAGCDIIGINNRDLKTFNVDINTTENLIKYIPQNTTIVSESGIKTPEDIRYLASLGVDAVLIGETFMKIIDDIDKISDFVKEAKGGG</sequence>
<comment type="catalytic activity">
    <reaction evidence="1">
        <text>1-(2-carboxyphenylamino)-1-deoxy-D-ribulose 5-phosphate + H(+) = (1S,2R)-1-C-(indol-3-yl)glycerol 3-phosphate + CO2 + H2O</text>
        <dbReference type="Rhea" id="RHEA:23476"/>
        <dbReference type="ChEBI" id="CHEBI:15377"/>
        <dbReference type="ChEBI" id="CHEBI:15378"/>
        <dbReference type="ChEBI" id="CHEBI:16526"/>
        <dbReference type="ChEBI" id="CHEBI:58613"/>
        <dbReference type="ChEBI" id="CHEBI:58866"/>
        <dbReference type="EC" id="4.1.1.48"/>
    </reaction>
</comment>
<comment type="pathway">
    <text evidence="1">Amino-acid biosynthesis; L-tryptophan biosynthesis; L-tryptophan from chorismate: step 4/5.</text>
</comment>
<comment type="similarity">
    <text evidence="1">Belongs to the TrpC family.</text>
</comment>
<name>TRPC_THEPX</name>
<organism>
    <name type="scientific">Thermoanaerobacter sp. (strain X514)</name>
    <dbReference type="NCBI Taxonomy" id="399726"/>
    <lineage>
        <taxon>Bacteria</taxon>
        <taxon>Bacillati</taxon>
        <taxon>Bacillota</taxon>
        <taxon>Clostridia</taxon>
        <taxon>Thermoanaerobacterales</taxon>
        <taxon>Thermoanaerobacteraceae</taxon>
        <taxon>Thermoanaerobacter</taxon>
    </lineage>
</organism>
<reference key="1">
    <citation type="submission" date="2008-01" db="EMBL/GenBank/DDBJ databases">
        <title>Complete sequence of Thermoanaerobacter sp. X514.</title>
        <authorList>
            <consortium name="US DOE Joint Genome Institute"/>
            <person name="Copeland A."/>
            <person name="Lucas S."/>
            <person name="Lapidus A."/>
            <person name="Barry K."/>
            <person name="Glavina del Rio T."/>
            <person name="Dalin E."/>
            <person name="Tice H."/>
            <person name="Pitluck S."/>
            <person name="Bruce D."/>
            <person name="Goodwin L."/>
            <person name="Saunders E."/>
            <person name="Brettin T."/>
            <person name="Detter J.C."/>
            <person name="Han C."/>
            <person name="Schmutz J."/>
            <person name="Larimer F."/>
            <person name="Land M."/>
            <person name="Hauser L."/>
            <person name="Kyrpides N."/>
            <person name="Kim E."/>
            <person name="Hemme C."/>
            <person name="Fields M.W."/>
            <person name="He Z."/>
            <person name="Zhou J."/>
            <person name="Richardson P."/>
        </authorList>
    </citation>
    <scope>NUCLEOTIDE SEQUENCE [LARGE SCALE GENOMIC DNA]</scope>
    <source>
        <strain>X514</strain>
    </source>
</reference>